<reference key="1">
    <citation type="journal article" date="2003" name="Mol. Microbiol.">
        <title>An integrated analysis of the genome of the hyperthermophilic archaeon Pyrococcus abyssi.</title>
        <authorList>
            <person name="Cohen G.N."/>
            <person name="Barbe V."/>
            <person name="Flament D."/>
            <person name="Galperin M."/>
            <person name="Heilig R."/>
            <person name="Lecompte O."/>
            <person name="Poch O."/>
            <person name="Prieur D."/>
            <person name="Querellou J."/>
            <person name="Ripp R."/>
            <person name="Thierry J.-C."/>
            <person name="Van der Oost J."/>
            <person name="Weissenbach J."/>
            <person name="Zivanovic Y."/>
            <person name="Forterre P."/>
        </authorList>
    </citation>
    <scope>NUCLEOTIDE SEQUENCE [LARGE SCALE GENOMIC DNA]</scope>
    <source>
        <strain>GE5 / Orsay</strain>
    </source>
</reference>
<reference key="2">
    <citation type="journal article" date="2012" name="Curr. Microbiol.">
        <title>Re-annotation of two hyperthermophilic archaea Pyrococcus abyssi GE5 and Pyrococcus furiosus DSM 3638.</title>
        <authorList>
            <person name="Gao J."/>
            <person name="Wang J."/>
        </authorList>
    </citation>
    <scope>GENOME REANNOTATION</scope>
    <source>
        <strain>GE5 / Orsay</strain>
    </source>
</reference>
<organism>
    <name type="scientific">Pyrococcus abyssi (strain GE5 / Orsay)</name>
    <dbReference type="NCBI Taxonomy" id="272844"/>
    <lineage>
        <taxon>Archaea</taxon>
        <taxon>Methanobacteriati</taxon>
        <taxon>Methanobacteriota</taxon>
        <taxon>Thermococci</taxon>
        <taxon>Thermococcales</taxon>
        <taxon>Thermococcaceae</taxon>
        <taxon>Pyrococcus</taxon>
    </lineage>
</organism>
<gene>
    <name type="ordered locus">PYRAB06500</name>
    <name type="ORF">PAB8160</name>
</gene>
<dbReference type="EMBL" id="AJ248285">
    <property type="protein sequence ID" value="CAB49563.1"/>
    <property type="molecule type" value="Genomic_DNA"/>
</dbReference>
<dbReference type="EMBL" id="HE613800">
    <property type="protein sequence ID" value="CCE70035.1"/>
    <property type="molecule type" value="Genomic_DNA"/>
</dbReference>
<dbReference type="PIR" id="B75106">
    <property type="entry name" value="B75106"/>
</dbReference>
<dbReference type="RefSeq" id="WP_010867765.1">
    <property type="nucleotide sequence ID" value="NC_000868.1"/>
</dbReference>
<dbReference type="PDB" id="1H64">
    <property type="method" value="X-ray"/>
    <property type="resolution" value="1.90 A"/>
    <property type="chains" value="1/2/A/B/C/D/E/F/G/H/I/J/K/L/M/N/O/P/Q/R/S/T/U/V/W/X/Y/Z=1-75"/>
</dbReference>
<dbReference type="PDB" id="1M8V">
    <property type="method" value="X-ray"/>
    <property type="resolution" value="2.60 A"/>
    <property type="chains" value="A/B/C/D/E/F/G/H/I/J/K/L/M/N=3-75"/>
</dbReference>
<dbReference type="PDBsum" id="1H64"/>
<dbReference type="PDBsum" id="1M8V"/>
<dbReference type="SMR" id="Q9V0Y8"/>
<dbReference type="STRING" id="272844.PAB8160"/>
<dbReference type="KEGG" id="pab:PAB8160"/>
<dbReference type="PATRIC" id="fig|272844.11.peg.681"/>
<dbReference type="eggNOG" id="arCOG00998">
    <property type="taxonomic scope" value="Archaea"/>
</dbReference>
<dbReference type="HOGENOM" id="CLU_076902_11_1_2"/>
<dbReference type="OrthoDB" id="371816at2157"/>
<dbReference type="PhylomeDB" id="Q9V0Y8"/>
<dbReference type="EvolutionaryTrace" id="Q9V0Y8"/>
<dbReference type="Proteomes" id="UP000000810">
    <property type="component" value="Chromosome"/>
</dbReference>
<dbReference type="Proteomes" id="UP000009139">
    <property type="component" value="Chromosome"/>
</dbReference>
<dbReference type="GO" id="GO:1990904">
    <property type="term" value="C:ribonucleoprotein complex"/>
    <property type="evidence" value="ECO:0007669"/>
    <property type="project" value="UniProtKB-KW"/>
</dbReference>
<dbReference type="GO" id="GO:0120114">
    <property type="term" value="C:Sm-like protein family complex"/>
    <property type="evidence" value="ECO:0007669"/>
    <property type="project" value="UniProtKB-ARBA"/>
</dbReference>
<dbReference type="GO" id="GO:0003723">
    <property type="term" value="F:RNA binding"/>
    <property type="evidence" value="ECO:0007669"/>
    <property type="project" value="InterPro"/>
</dbReference>
<dbReference type="GO" id="GO:0000398">
    <property type="term" value="P:mRNA splicing, via spliceosome"/>
    <property type="evidence" value="ECO:0007669"/>
    <property type="project" value="InterPro"/>
</dbReference>
<dbReference type="CDD" id="cd01731">
    <property type="entry name" value="archaeal_Sm1"/>
    <property type="match status" value="1"/>
</dbReference>
<dbReference type="Gene3D" id="2.30.30.100">
    <property type="match status" value="1"/>
</dbReference>
<dbReference type="HAMAP" id="MF_00257">
    <property type="entry name" value="Lsm_RuxX"/>
    <property type="match status" value="1"/>
</dbReference>
<dbReference type="InterPro" id="IPR016487">
    <property type="entry name" value="Lsm6/sSmF"/>
</dbReference>
<dbReference type="InterPro" id="IPR010920">
    <property type="entry name" value="LSM_dom_sf"/>
</dbReference>
<dbReference type="InterPro" id="IPR047575">
    <property type="entry name" value="Sm"/>
</dbReference>
<dbReference type="InterPro" id="IPR001163">
    <property type="entry name" value="Sm_dom_euk/arc"/>
</dbReference>
<dbReference type="InterPro" id="IPR022901">
    <property type="entry name" value="snRNP_Sm-like_arc"/>
</dbReference>
<dbReference type="NCBIfam" id="NF001963">
    <property type="entry name" value="PRK00737.1"/>
    <property type="match status" value="1"/>
</dbReference>
<dbReference type="PANTHER" id="PTHR11021:SF0">
    <property type="entry name" value="SMALL NUCLEAR RIBONUCLEOPROTEIN F"/>
    <property type="match status" value="1"/>
</dbReference>
<dbReference type="PANTHER" id="PTHR11021">
    <property type="entry name" value="SMALL NUCLEAR RIBONUCLEOPROTEIN F SNRNP-F"/>
    <property type="match status" value="1"/>
</dbReference>
<dbReference type="Pfam" id="PF01423">
    <property type="entry name" value="LSM"/>
    <property type="match status" value="1"/>
</dbReference>
<dbReference type="SMART" id="SM00651">
    <property type="entry name" value="Sm"/>
    <property type="match status" value="1"/>
</dbReference>
<dbReference type="SUPFAM" id="SSF50182">
    <property type="entry name" value="Sm-like ribonucleoproteins"/>
    <property type="match status" value="1"/>
</dbReference>
<dbReference type="PROSITE" id="PS52002">
    <property type="entry name" value="SM"/>
    <property type="match status" value="1"/>
</dbReference>
<accession>Q9V0Y8</accession>
<accession>G8ZJA8</accession>
<comment type="similarity">
    <text evidence="2">Belongs to the snRNP Sm proteins family.</text>
</comment>
<proteinExistence type="evidence at protein level"/>
<feature type="chain" id="PRO_0000125596" description="Putative snRNP Sm-like protein">
    <location>
        <begin position="1"/>
        <end position="75"/>
    </location>
</feature>
<feature type="domain" description="Sm" evidence="1">
    <location>
        <begin position="4"/>
        <end position="75"/>
    </location>
</feature>
<feature type="helix" evidence="3">
    <location>
        <begin position="5"/>
        <end position="10"/>
    </location>
</feature>
<feature type="turn" evidence="3">
    <location>
        <begin position="11"/>
        <end position="14"/>
    </location>
</feature>
<feature type="strand" evidence="3">
    <location>
        <begin position="15"/>
        <end position="21"/>
    </location>
</feature>
<feature type="strand" evidence="3">
    <location>
        <begin position="24"/>
        <end position="34"/>
    </location>
</feature>
<feature type="strand" evidence="3">
    <location>
        <begin position="40"/>
        <end position="49"/>
    </location>
</feature>
<feature type="strand" evidence="3">
    <location>
        <begin position="52"/>
        <end position="62"/>
    </location>
</feature>
<feature type="helix" evidence="3">
    <location>
        <begin position="64"/>
        <end position="66"/>
    </location>
</feature>
<feature type="strand" evidence="3">
    <location>
        <begin position="67"/>
        <end position="72"/>
    </location>
</feature>
<keyword id="KW-0002">3D-structure</keyword>
<keyword id="KW-0687">Ribonucleoprotein</keyword>
<name>RUXX_PYRAB</name>
<sequence length="75" mass="8489">MAERPLDVIHRSLDKDVLVILKKGFEFRGRLIGYDIHLNVVLADAEMIQDGEVVKRYGKIVIRGDNVLAISPTEE</sequence>
<protein>
    <recommendedName>
        <fullName>Putative snRNP Sm-like protein</fullName>
    </recommendedName>
</protein>
<evidence type="ECO:0000255" key="1">
    <source>
        <dbReference type="PROSITE-ProRule" id="PRU01346"/>
    </source>
</evidence>
<evidence type="ECO:0000305" key="2"/>
<evidence type="ECO:0007829" key="3">
    <source>
        <dbReference type="PDB" id="1H64"/>
    </source>
</evidence>